<keyword id="KW-0067">ATP-binding</keyword>
<keyword id="KW-0315">Glutamine amidotransferase</keyword>
<keyword id="KW-0436">Ligase</keyword>
<keyword id="KW-0460">Magnesium</keyword>
<keyword id="KW-0479">Metal-binding</keyword>
<keyword id="KW-0547">Nucleotide-binding</keyword>
<keyword id="KW-0665">Pyrimidine biosynthesis</keyword>
<evidence type="ECO:0000255" key="1">
    <source>
        <dbReference type="HAMAP-Rule" id="MF_01227"/>
    </source>
</evidence>
<comment type="function">
    <text evidence="1">Catalyzes the ATP-dependent amination of UTP to CTP with either L-glutamine or ammonia as the source of nitrogen. Regulates intracellular CTP levels through interactions with the four ribonucleotide triphosphates.</text>
</comment>
<comment type="catalytic activity">
    <reaction evidence="1">
        <text>UTP + L-glutamine + ATP + H2O = CTP + L-glutamate + ADP + phosphate + 2 H(+)</text>
        <dbReference type="Rhea" id="RHEA:26426"/>
        <dbReference type="ChEBI" id="CHEBI:15377"/>
        <dbReference type="ChEBI" id="CHEBI:15378"/>
        <dbReference type="ChEBI" id="CHEBI:29985"/>
        <dbReference type="ChEBI" id="CHEBI:30616"/>
        <dbReference type="ChEBI" id="CHEBI:37563"/>
        <dbReference type="ChEBI" id="CHEBI:43474"/>
        <dbReference type="ChEBI" id="CHEBI:46398"/>
        <dbReference type="ChEBI" id="CHEBI:58359"/>
        <dbReference type="ChEBI" id="CHEBI:456216"/>
        <dbReference type="EC" id="6.3.4.2"/>
    </reaction>
</comment>
<comment type="catalytic activity">
    <reaction evidence="1">
        <text>L-glutamine + H2O = L-glutamate + NH4(+)</text>
        <dbReference type="Rhea" id="RHEA:15889"/>
        <dbReference type="ChEBI" id="CHEBI:15377"/>
        <dbReference type="ChEBI" id="CHEBI:28938"/>
        <dbReference type="ChEBI" id="CHEBI:29985"/>
        <dbReference type="ChEBI" id="CHEBI:58359"/>
    </reaction>
</comment>
<comment type="catalytic activity">
    <reaction evidence="1">
        <text>UTP + NH4(+) + ATP = CTP + ADP + phosphate + 2 H(+)</text>
        <dbReference type="Rhea" id="RHEA:16597"/>
        <dbReference type="ChEBI" id="CHEBI:15378"/>
        <dbReference type="ChEBI" id="CHEBI:28938"/>
        <dbReference type="ChEBI" id="CHEBI:30616"/>
        <dbReference type="ChEBI" id="CHEBI:37563"/>
        <dbReference type="ChEBI" id="CHEBI:43474"/>
        <dbReference type="ChEBI" id="CHEBI:46398"/>
        <dbReference type="ChEBI" id="CHEBI:456216"/>
    </reaction>
</comment>
<comment type="activity regulation">
    <text evidence="1">Allosterically activated by GTP, when glutamine is the substrate; GTP has no effect on the reaction when ammonia is the substrate. The allosteric effector GTP functions by stabilizing the protein conformation that binds the tetrahedral intermediate(s) formed during glutamine hydrolysis. Inhibited by the product CTP, via allosteric rather than competitive inhibition.</text>
</comment>
<comment type="pathway">
    <text evidence="1">Pyrimidine metabolism; CTP biosynthesis via de novo pathway; CTP from UDP: step 2/2.</text>
</comment>
<comment type="subunit">
    <text evidence="1">Homotetramer.</text>
</comment>
<comment type="miscellaneous">
    <text evidence="1">CTPSs have evolved a hybrid strategy for distinguishing between UTP and CTP. The overlapping regions of the product feedback inhibitory and substrate sites recognize a common feature in both compounds, the triphosphate moiety. To differentiate isosteric substrate and product pyrimidine rings, an additional pocket far from the expected kinase/ligase catalytic site, specifically recognizes the cytosine and ribose portions of the product inhibitor.</text>
</comment>
<comment type="similarity">
    <text evidence="1">Belongs to the CTP synthase family.</text>
</comment>
<organism>
    <name type="scientific">Yersinia pseudotuberculosis serotype IB (strain PB1/+)</name>
    <dbReference type="NCBI Taxonomy" id="502801"/>
    <lineage>
        <taxon>Bacteria</taxon>
        <taxon>Pseudomonadati</taxon>
        <taxon>Pseudomonadota</taxon>
        <taxon>Gammaproteobacteria</taxon>
        <taxon>Enterobacterales</taxon>
        <taxon>Yersiniaceae</taxon>
        <taxon>Yersinia</taxon>
    </lineage>
</organism>
<reference key="1">
    <citation type="submission" date="2008-04" db="EMBL/GenBank/DDBJ databases">
        <title>Complete sequence of Yersinia pseudotuberculosis PB1/+.</title>
        <authorList>
            <person name="Copeland A."/>
            <person name="Lucas S."/>
            <person name="Lapidus A."/>
            <person name="Glavina del Rio T."/>
            <person name="Dalin E."/>
            <person name="Tice H."/>
            <person name="Bruce D."/>
            <person name="Goodwin L."/>
            <person name="Pitluck S."/>
            <person name="Munk A.C."/>
            <person name="Brettin T."/>
            <person name="Detter J.C."/>
            <person name="Han C."/>
            <person name="Tapia R."/>
            <person name="Schmutz J."/>
            <person name="Larimer F."/>
            <person name="Land M."/>
            <person name="Hauser L."/>
            <person name="Challacombe J.F."/>
            <person name="Green L."/>
            <person name="Lindler L.E."/>
            <person name="Nikolich M.P."/>
            <person name="Richardson P."/>
        </authorList>
    </citation>
    <scope>NUCLEOTIDE SEQUENCE [LARGE SCALE GENOMIC DNA]</scope>
    <source>
        <strain>PB1/+</strain>
    </source>
</reference>
<sequence length="545" mass="60363">MTTNYIFVTGGVVSSLGKGIAAASLAAILEARGLNVTIMKLDPYINVDPGTMSPTQHGEVFVTEDGAETDLDLGHYERFIRTKMTRRNNFTTGRIYSEVLRKERRGDYLGATIQVIPHITNAIKERIIEGGEGHDVVLVEIGGTVGDIESLPFLEAIRQMAVDVGREHTLYMHLTLVPYLAAAGEVKTKPTQHSVKELLSIGIQPDVLICRSDRAVPANERAKIALFCNVPEKAVISLKDVDSIYKIPGLLKSQGLDDYICKRFSLTCPEANLAEWEQVLYEESNPGGEVTIGMIGKYVELPDAYKSVIEALKHGGLKNRLTVNIKLIDSQDVETRGEEMLKELDAILIPGGFGYRGVEGKVLAARYAREHNIPYLGICLGMQVALMEFARNVAGMENANSTEFVPDCKYPVVALITEWRDEDGNVEIRTEESDLGGTMRVGGQQCHLTEGSLVRQMYGEPTIVERHRHRYEVNNMLLKQIEAAGLRVAGRSADNKLVEIIELPDHPWFVACQFHPEFTSTPRDGHPLFAGFVKAAGDYQKRQVK</sequence>
<protein>
    <recommendedName>
        <fullName evidence="1">CTP synthase</fullName>
        <ecNumber evidence="1">6.3.4.2</ecNumber>
    </recommendedName>
    <alternativeName>
        <fullName evidence="1">Cytidine 5'-triphosphate synthase</fullName>
    </alternativeName>
    <alternativeName>
        <fullName evidence="1">Cytidine triphosphate synthetase</fullName>
        <shortName evidence="1">CTP synthetase</shortName>
        <shortName evidence="1">CTPS</shortName>
    </alternativeName>
    <alternativeName>
        <fullName evidence="1">UTP--ammonia ligase</fullName>
    </alternativeName>
</protein>
<proteinExistence type="inferred from homology"/>
<gene>
    <name evidence="1" type="primary">pyrG</name>
    <name type="ordered locus">YPTS_0787</name>
</gene>
<name>PYRG_YERPB</name>
<feature type="chain" id="PRO_1000139608" description="CTP synthase">
    <location>
        <begin position="1"/>
        <end position="545"/>
    </location>
</feature>
<feature type="domain" description="Glutamine amidotransferase type-1" evidence="1">
    <location>
        <begin position="291"/>
        <end position="542"/>
    </location>
</feature>
<feature type="region of interest" description="Amidoligase domain" evidence="1">
    <location>
        <begin position="1"/>
        <end position="266"/>
    </location>
</feature>
<feature type="active site" description="Nucleophile; for glutamine hydrolysis" evidence="1">
    <location>
        <position position="379"/>
    </location>
</feature>
<feature type="active site" evidence="1">
    <location>
        <position position="515"/>
    </location>
</feature>
<feature type="active site" evidence="1">
    <location>
        <position position="517"/>
    </location>
</feature>
<feature type="binding site" evidence="1">
    <location>
        <position position="14"/>
    </location>
    <ligand>
        <name>CTP</name>
        <dbReference type="ChEBI" id="CHEBI:37563"/>
        <note>allosteric inhibitor</note>
    </ligand>
</feature>
<feature type="binding site" evidence="1">
    <location>
        <position position="14"/>
    </location>
    <ligand>
        <name>UTP</name>
        <dbReference type="ChEBI" id="CHEBI:46398"/>
    </ligand>
</feature>
<feature type="binding site" evidence="1">
    <location>
        <begin position="15"/>
        <end position="20"/>
    </location>
    <ligand>
        <name>ATP</name>
        <dbReference type="ChEBI" id="CHEBI:30616"/>
    </ligand>
</feature>
<feature type="binding site" evidence="1">
    <location>
        <position position="72"/>
    </location>
    <ligand>
        <name>ATP</name>
        <dbReference type="ChEBI" id="CHEBI:30616"/>
    </ligand>
</feature>
<feature type="binding site" evidence="1">
    <location>
        <position position="72"/>
    </location>
    <ligand>
        <name>Mg(2+)</name>
        <dbReference type="ChEBI" id="CHEBI:18420"/>
    </ligand>
</feature>
<feature type="binding site" evidence="1">
    <location>
        <position position="140"/>
    </location>
    <ligand>
        <name>Mg(2+)</name>
        <dbReference type="ChEBI" id="CHEBI:18420"/>
    </ligand>
</feature>
<feature type="binding site" evidence="1">
    <location>
        <begin position="147"/>
        <end position="149"/>
    </location>
    <ligand>
        <name>CTP</name>
        <dbReference type="ChEBI" id="CHEBI:37563"/>
        <note>allosteric inhibitor</note>
    </ligand>
</feature>
<feature type="binding site" evidence="1">
    <location>
        <begin position="187"/>
        <end position="192"/>
    </location>
    <ligand>
        <name>CTP</name>
        <dbReference type="ChEBI" id="CHEBI:37563"/>
        <note>allosteric inhibitor</note>
    </ligand>
</feature>
<feature type="binding site" evidence="1">
    <location>
        <begin position="187"/>
        <end position="192"/>
    </location>
    <ligand>
        <name>UTP</name>
        <dbReference type="ChEBI" id="CHEBI:46398"/>
    </ligand>
</feature>
<feature type="binding site" evidence="1">
    <location>
        <position position="223"/>
    </location>
    <ligand>
        <name>CTP</name>
        <dbReference type="ChEBI" id="CHEBI:37563"/>
        <note>allosteric inhibitor</note>
    </ligand>
</feature>
<feature type="binding site" evidence="1">
    <location>
        <position position="223"/>
    </location>
    <ligand>
        <name>UTP</name>
        <dbReference type="ChEBI" id="CHEBI:46398"/>
    </ligand>
</feature>
<feature type="binding site" evidence="1">
    <location>
        <begin position="239"/>
        <end position="241"/>
    </location>
    <ligand>
        <name>ATP</name>
        <dbReference type="ChEBI" id="CHEBI:30616"/>
    </ligand>
</feature>
<feature type="binding site" evidence="1">
    <location>
        <position position="352"/>
    </location>
    <ligand>
        <name>L-glutamine</name>
        <dbReference type="ChEBI" id="CHEBI:58359"/>
    </ligand>
</feature>
<feature type="binding site" evidence="1">
    <location>
        <begin position="380"/>
        <end position="383"/>
    </location>
    <ligand>
        <name>L-glutamine</name>
        <dbReference type="ChEBI" id="CHEBI:58359"/>
    </ligand>
</feature>
<feature type="binding site" evidence="1">
    <location>
        <position position="403"/>
    </location>
    <ligand>
        <name>L-glutamine</name>
        <dbReference type="ChEBI" id="CHEBI:58359"/>
    </ligand>
</feature>
<feature type="binding site" evidence="1">
    <location>
        <position position="470"/>
    </location>
    <ligand>
        <name>L-glutamine</name>
        <dbReference type="ChEBI" id="CHEBI:58359"/>
    </ligand>
</feature>
<accession>B2K560</accession>
<dbReference type="EC" id="6.3.4.2" evidence="1"/>
<dbReference type="EMBL" id="CP001048">
    <property type="protein sequence ID" value="ACC87771.1"/>
    <property type="molecule type" value="Genomic_DNA"/>
</dbReference>
<dbReference type="RefSeq" id="WP_002209376.1">
    <property type="nucleotide sequence ID" value="NZ_CP009780.1"/>
</dbReference>
<dbReference type="SMR" id="B2K560"/>
<dbReference type="MEROPS" id="C26.964"/>
<dbReference type="GeneID" id="96664251"/>
<dbReference type="KEGG" id="ypb:YPTS_0787"/>
<dbReference type="PATRIC" id="fig|502801.10.peg.119"/>
<dbReference type="UniPathway" id="UPA00159">
    <property type="reaction ID" value="UER00277"/>
</dbReference>
<dbReference type="GO" id="GO:0005829">
    <property type="term" value="C:cytosol"/>
    <property type="evidence" value="ECO:0007669"/>
    <property type="project" value="TreeGrafter"/>
</dbReference>
<dbReference type="GO" id="GO:0005524">
    <property type="term" value="F:ATP binding"/>
    <property type="evidence" value="ECO:0007669"/>
    <property type="project" value="UniProtKB-KW"/>
</dbReference>
<dbReference type="GO" id="GO:0003883">
    <property type="term" value="F:CTP synthase activity"/>
    <property type="evidence" value="ECO:0007669"/>
    <property type="project" value="UniProtKB-UniRule"/>
</dbReference>
<dbReference type="GO" id="GO:0004359">
    <property type="term" value="F:glutaminase activity"/>
    <property type="evidence" value="ECO:0007669"/>
    <property type="project" value="RHEA"/>
</dbReference>
<dbReference type="GO" id="GO:0042802">
    <property type="term" value="F:identical protein binding"/>
    <property type="evidence" value="ECO:0007669"/>
    <property type="project" value="TreeGrafter"/>
</dbReference>
<dbReference type="GO" id="GO:0046872">
    <property type="term" value="F:metal ion binding"/>
    <property type="evidence" value="ECO:0007669"/>
    <property type="project" value="UniProtKB-KW"/>
</dbReference>
<dbReference type="GO" id="GO:0044210">
    <property type="term" value="P:'de novo' CTP biosynthetic process"/>
    <property type="evidence" value="ECO:0007669"/>
    <property type="project" value="UniProtKB-UniRule"/>
</dbReference>
<dbReference type="GO" id="GO:0019856">
    <property type="term" value="P:pyrimidine nucleobase biosynthetic process"/>
    <property type="evidence" value="ECO:0007669"/>
    <property type="project" value="TreeGrafter"/>
</dbReference>
<dbReference type="CDD" id="cd03113">
    <property type="entry name" value="CTPS_N"/>
    <property type="match status" value="1"/>
</dbReference>
<dbReference type="CDD" id="cd01746">
    <property type="entry name" value="GATase1_CTP_Synthase"/>
    <property type="match status" value="1"/>
</dbReference>
<dbReference type="FunFam" id="3.40.50.300:FF:000009">
    <property type="entry name" value="CTP synthase"/>
    <property type="match status" value="1"/>
</dbReference>
<dbReference type="FunFam" id="3.40.50.880:FF:000002">
    <property type="entry name" value="CTP synthase"/>
    <property type="match status" value="1"/>
</dbReference>
<dbReference type="Gene3D" id="3.40.50.880">
    <property type="match status" value="1"/>
</dbReference>
<dbReference type="Gene3D" id="3.40.50.300">
    <property type="entry name" value="P-loop containing nucleotide triphosphate hydrolases"/>
    <property type="match status" value="1"/>
</dbReference>
<dbReference type="HAMAP" id="MF_01227">
    <property type="entry name" value="PyrG"/>
    <property type="match status" value="1"/>
</dbReference>
<dbReference type="InterPro" id="IPR029062">
    <property type="entry name" value="Class_I_gatase-like"/>
</dbReference>
<dbReference type="InterPro" id="IPR004468">
    <property type="entry name" value="CTP_synthase"/>
</dbReference>
<dbReference type="InterPro" id="IPR017456">
    <property type="entry name" value="CTP_synthase_N"/>
</dbReference>
<dbReference type="InterPro" id="IPR017926">
    <property type="entry name" value="GATASE"/>
</dbReference>
<dbReference type="InterPro" id="IPR033828">
    <property type="entry name" value="GATase1_CTP_Synthase"/>
</dbReference>
<dbReference type="InterPro" id="IPR027417">
    <property type="entry name" value="P-loop_NTPase"/>
</dbReference>
<dbReference type="NCBIfam" id="NF003792">
    <property type="entry name" value="PRK05380.1"/>
    <property type="match status" value="1"/>
</dbReference>
<dbReference type="NCBIfam" id="TIGR00337">
    <property type="entry name" value="PyrG"/>
    <property type="match status" value="1"/>
</dbReference>
<dbReference type="PANTHER" id="PTHR11550">
    <property type="entry name" value="CTP SYNTHASE"/>
    <property type="match status" value="1"/>
</dbReference>
<dbReference type="PANTHER" id="PTHR11550:SF0">
    <property type="entry name" value="CTP SYNTHASE-RELATED"/>
    <property type="match status" value="1"/>
</dbReference>
<dbReference type="Pfam" id="PF06418">
    <property type="entry name" value="CTP_synth_N"/>
    <property type="match status" value="1"/>
</dbReference>
<dbReference type="Pfam" id="PF00117">
    <property type="entry name" value="GATase"/>
    <property type="match status" value="1"/>
</dbReference>
<dbReference type="SUPFAM" id="SSF52317">
    <property type="entry name" value="Class I glutamine amidotransferase-like"/>
    <property type="match status" value="1"/>
</dbReference>
<dbReference type="SUPFAM" id="SSF52540">
    <property type="entry name" value="P-loop containing nucleoside triphosphate hydrolases"/>
    <property type="match status" value="1"/>
</dbReference>
<dbReference type="PROSITE" id="PS51273">
    <property type="entry name" value="GATASE_TYPE_1"/>
    <property type="match status" value="1"/>
</dbReference>